<dbReference type="EMBL" id="CR858496">
    <property type="protein sequence ID" value="CAH90724.1"/>
    <property type="molecule type" value="mRNA"/>
</dbReference>
<dbReference type="RefSeq" id="NP_001125403.1">
    <property type="nucleotide sequence ID" value="NM_001131931.1"/>
</dbReference>
<dbReference type="SMR" id="Q5RBY6"/>
<dbReference type="FunCoup" id="Q5RBY6">
    <property type="interactions" value="1137"/>
</dbReference>
<dbReference type="STRING" id="9601.ENSPPYP00000015139"/>
<dbReference type="GeneID" id="100172308"/>
<dbReference type="KEGG" id="pon:100172308"/>
<dbReference type="CTD" id="152185"/>
<dbReference type="eggNOG" id="ENOG502QQ0H">
    <property type="taxonomic scope" value="Eukaryota"/>
</dbReference>
<dbReference type="InParanoid" id="Q5RBY6"/>
<dbReference type="OrthoDB" id="6361178at2759"/>
<dbReference type="Proteomes" id="UP000001595">
    <property type="component" value="Unplaced"/>
</dbReference>
<dbReference type="GO" id="GO:0005814">
    <property type="term" value="C:centriole"/>
    <property type="evidence" value="ECO:0000250"/>
    <property type="project" value="UniProtKB"/>
</dbReference>
<dbReference type="GO" id="GO:0005813">
    <property type="term" value="C:centrosome"/>
    <property type="evidence" value="ECO:0007669"/>
    <property type="project" value="TreeGrafter"/>
</dbReference>
<dbReference type="GO" id="GO:0005737">
    <property type="term" value="C:cytoplasm"/>
    <property type="evidence" value="ECO:0007669"/>
    <property type="project" value="UniProtKB-KW"/>
</dbReference>
<dbReference type="GO" id="GO:0005819">
    <property type="term" value="C:spindle"/>
    <property type="evidence" value="ECO:0000250"/>
    <property type="project" value="UniProtKB"/>
</dbReference>
<dbReference type="GO" id="GO:0051301">
    <property type="term" value="P:cell division"/>
    <property type="evidence" value="ECO:0007669"/>
    <property type="project" value="UniProtKB-KW"/>
</dbReference>
<dbReference type="GO" id="GO:0051310">
    <property type="term" value="P:metaphase chromosome alignment"/>
    <property type="evidence" value="ECO:0007669"/>
    <property type="project" value="TreeGrafter"/>
</dbReference>
<dbReference type="GO" id="GO:0090307">
    <property type="term" value="P:mitotic spindle assembly"/>
    <property type="evidence" value="ECO:0000250"/>
    <property type="project" value="UniProtKB"/>
</dbReference>
<dbReference type="GO" id="GO:0046599">
    <property type="term" value="P:regulation of centriole replication"/>
    <property type="evidence" value="ECO:0000250"/>
    <property type="project" value="UniProtKB"/>
</dbReference>
<dbReference type="InterPro" id="IPR031387">
    <property type="entry name" value="SPICE1"/>
</dbReference>
<dbReference type="PANTHER" id="PTHR31167">
    <property type="entry name" value="SPINDLE AND CENTRIOLE ASSOCIATED PROTEIN 1 SPICE1"/>
    <property type="match status" value="1"/>
</dbReference>
<dbReference type="PANTHER" id="PTHR31167:SF3">
    <property type="entry name" value="SPINDLE AND CENTRIOLE-ASSOCIATED PROTEIN 1"/>
    <property type="match status" value="1"/>
</dbReference>
<dbReference type="Pfam" id="PF15678">
    <property type="entry name" value="SPICE"/>
    <property type="match status" value="1"/>
</dbReference>
<accession>Q5RBY6</accession>
<proteinExistence type="evidence at transcript level"/>
<sequence length="855" mass="96235">MSFVRVNRCGPRVGVRKTPKVKKKKTSVKQEWDNTVTDLTVHRATPEDLVRRHEIHKSKNRALVHWELQEKALKRKWRKQKPETLNLEKRRLSIMKEILSDQYQMQDVLEKSDHLIAAAKELFPRRRTGFPNITVAPDSSQGPIVVNQDPITQSIFNESVIEPQALNDVDGEEEGTVTSQSGESENENELDNSLNSQSNTNTDRFLQQLTEENSELISKLWTDIQQKIVTQSQITPPGTPSSALSSGEQRAALNATNAVNRFQTRLQPEESTETLDSSYVVGHVLNSRKQKQLLNKVKRKPNLHALSKPKKNMLSGSTTSADLPNRTNSNLDVLKHMIHEVEHEMEEYERWTGREVKGLQSSQGLTGFTLSLVSSLCRLVRYLKESEIQLRKEVETRQQLEQVLGDHRELIDALTAEILRLREENAATQARLRQYMVTTDEQLISLTHAIKNCPVINNRQEIQASESGATGTRVMDSPEGPVVNANVSVPLMFREEVAEFPQEQLPVKLSQVPDPPDKMNLAKNFPAHIFEPAVLLTPPRQKSNLKFSPLQDVLRRTVQTRPAPRLLPTVEIIEKEQNWEEKTLPIDTDSQNSSEENRLFTQRWRVSHMGEDLENKTQAPFVNLSQPLCSSHSNTQQSRSPTFSEELPVLGDGQQLRTNESLIQRKDIMTRIADLTLQNSAIKAHMNNIIDPRGEQGDGLRELNKQESASDMTSTFPVAQSLTPGSMEERIAELNRQSMEARGKLLQLIEQQKLVGLNLSPPMSPVQLPLRAWTEGAKRTIEVSIPGAEAPESSKCSTVSPVSEINTRRSSGATSNSCSPLNATSGSGRFTPLNPRAKIEKQNEEGWFALSTHVS</sequence>
<protein>
    <recommendedName>
        <fullName>Spindle and centriole-associated protein 1</fullName>
    </recommendedName>
    <alternativeName>
        <fullName>Coiled-coil domain-containing protein 52</fullName>
    </alternativeName>
</protein>
<evidence type="ECO:0000250" key="1"/>
<evidence type="ECO:0000250" key="2">
    <source>
        <dbReference type="UniProtKB" id="Q8C804"/>
    </source>
</evidence>
<evidence type="ECO:0000250" key="3">
    <source>
        <dbReference type="UniProtKB" id="Q8N0Z3"/>
    </source>
</evidence>
<evidence type="ECO:0000255" key="4"/>
<evidence type="ECO:0000256" key="5">
    <source>
        <dbReference type="SAM" id="MobiDB-lite"/>
    </source>
</evidence>
<reference key="1">
    <citation type="submission" date="2004-11" db="EMBL/GenBank/DDBJ databases">
        <authorList>
            <consortium name="The German cDNA consortium"/>
        </authorList>
    </citation>
    <scope>NUCLEOTIDE SEQUENCE [LARGE SCALE MRNA]</scope>
    <source>
        <tissue>Kidney</tissue>
    </source>
</reference>
<feature type="chain" id="PRO_0000282415" description="Spindle and centriole-associated protein 1">
    <location>
        <begin position="1"/>
        <end position="855"/>
    </location>
</feature>
<feature type="region of interest" description="Disordered" evidence="5">
    <location>
        <begin position="164"/>
        <end position="200"/>
    </location>
</feature>
<feature type="region of interest" description="Disordered" evidence="5">
    <location>
        <begin position="300"/>
        <end position="328"/>
    </location>
</feature>
<feature type="region of interest" description="Disordered" evidence="5">
    <location>
        <begin position="789"/>
        <end position="834"/>
    </location>
</feature>
<feature type="coiled-coil region" evidence="4">
    <location>
        <begin position="325"/>
        <end position="437"/>
    </location>
</feature>
<feature type="coiled-coil region" evidence="4">
    <location>
        <begin position="725"/>
        <end position="751"/>
    </location>
</feature>
<feature type="compositionally biased region" description="Basic residues" evidence="5">
    <location>
        <begin position="300"/>
        <end position="311"/>
    </location>
</feature>
<feature type="compositionally biased region" description="Polar residues" evidence="5">
    <location>
        <begin position="314"/>
        <end position="328"/>
    </location>
</feature>
<feature type="compositionally biased region" description="Polar residues" evidence="5">
    <location>
        <begin position="794"/>
        <end position="828"/>
    </location>
</feature>
<feature type="modified residue" description="Phosphothreonine" evidence="3">
    <location>
        <position position="235"/>
    </location>
</feature>
<feature type="modified residue" description="Phosphoserine" evidence="3">
    <location>
        <position position="640"/>
    </location>
</feature>
<feature type="modified residue" description="Phosphoserine" evidence="3">
    <location>
        <position position="644"/>
    </location>
</feature>
<feature type="modified residue" description="Phosphoserine" evidence="3">
    <location>
        <position position="760"/>
    </location>
</feature>
<feature type="modified residue" description="Phosphoserine" evidence="3">
    <location>
        <position position="764"/>
    </location>
</feature>
<feature type="modified residue" description="Phosphoserine" evidence="2">
    <location>
        <position position="819"/>
    </location>
</feature>
<gene>
    <name type="primary">SPICE1</name>
    <name type="synonym">CCDC52</name>
</gene>
<comment type="function">
    <text evidence="1">Regulator required for centriole duplication, for proper bipolar spindle formation and chromosome congression in mitosis.</text>
</comment>
<comment type="subunit">
    <text evidence="1">Interacts with CEP120.</text>
</comment>
<comment type="subcellular location">
    <subcellularLocation>
        <location evidence="1">Cytoplasm</location>
        <location evidence="1">Cytoskeleton</location>
        <location evidence="1">Microtubule organizing center</location>
        <location evidence="1">Centrosome</location>
        <location evidence="1">Centriole</location>
    </subcellularLocation>
    <subcellularLocation>
        <location evidence="1">Cytoplasm</location>
        <location evidence="1">Cytoskeleton</location>
        <location evidence="1">Spindle</location>
    </subcellularLocation>
</comment>
<organism>
    <name type="scientific">Pongo abelii</name>
    <name type="common">Sumatran orangutan</name>
    <name type="synonym">Pongo pygmaeus abelii</name>
    <dbReference type="NCBI Taxonomy" id="9601"/>
    <lineage>
        <taxon>Eukaryota</taxon>
        <taxon>Metazoa</taxon>
        <taxon>Chordata</taxon>
        <taxon>Craniata</taxon>
        <taxon>Vertebrata</taxon>
        <taxon>Euteleostomi</taxon>
        <taxon>Mammalia</taxon>
        <taxon>Eutheria</taxon>
        <taxon>Euarchontoglires</taxon>
        <taxon>Primates</taxon>
        <taxon>Haplorrhini</taxon>
        <taxon>Catarrhini</taxon>
        <taxon>Hominidae</taxon>
        <taxon>Pongo</taxon>
    </lineage>
</organism>
<name>SPICE_PONAB</name>
<keyword id="KW-0131">Cell cycle</keyword>
<keyword id="KW-0132">Cell division</keyword>
<keyword id="KW-0175">Coiled coil</keyword>
<keyword id="KW-0963">Cytoplasm</keyword>
<keyword id="KW-0206">Cytoskeleton</keyword>
<keyword id="KW-0498">Mitosis</keyword>
<keyword id="KW-0597">Phosphoprotein</keyword>
<keyword id="KW-1185">Reference proteome</keyword>